<feature type="chain" id="PRO_1000053347" description="ATP synthase gamma chain">
    <location>
        <begin position="1"/>
        <end position="293"/>
    </location>
</feature>
<proteinExistence type="inferred from homology"/>
<dbReference type="EMBL" id="CP000114">
    <property type="protein sequence ID" value="ABA45935.1"/>
    <property type="molecule type" value="Genomic_DNA"/>
</dbReference>
<dbReference type="RefSeq" id="WP_000919085.1">
    <property type="nucleotide sequence ID" value="NC_007432.1"/>
</dbReference>
<dbReference type="SMR" id="Q3K1J6"/>
<dbReference type="KEGG" id="sak:SAK_0985"/>
<dbReference type="HOGENOM" id="CLU_050669_0_1_9"/>
<dbReference type="GO" id="GO:0005886">
    <property type="term" value="C:plasma membrane"/>
    <property type="evidence" value="ECO:0007669"/>
    <property type="project" value="UniProtKB-SubCell"/>
</dbReference>
<dbReference type="GO" id="GO:0045259">
    <property type="term" value="C:proton-transporting ATP synthase complex"/>
    <property type="evidence" value="ECO:0007669"/>
    <property type="project" value="UniProtKB-KW"/>
</dbReference>
<dbReference type="GO" id="GO:0005524">
    <property type="term" value="F:ATP binding"/>
    <property type="evidence" value="ECO:0007669"/>
    <property type="project" value="UniProtKB-UniRule"/>
</dbReference>
<dbReference type="GO" id="GO:0046933">
    <property type="term" value="F:proton-transporting ATP synthase activity, rotational mechanism"/>
    <property type="evidence" value="ECO:0007669"/>
    <property type="project" value="UniProtKB-UniRule"/>
</dbReference>
<dbReference type="GO" id="GO:0042777">
    <property type="term" value="P:proton motive force-driven plasma membrane ATP synthesis"/>
    <property type="evidence" value="ECO:0007669"/>
    <property type="project" value="UniProtKB-UniRule"/>
</dbReference>
<dbReference type="CDD" id="cd12151">
    <property type="entry name" value="F1-ATPase_gamma"/>
    <property type="match status" value="1"/>
</dbReference>
<dbReference type="FunFam" id="3.40.1380.10:FF:000002">
    <property type="entry name" value="ATP synthase gamma chain"/>
    <property type="match status" value="1"/>
</dbReference>
<dbReference type="Gene3D" id="3.40.1380.10">
    <property type="match status" value="1"/>
</dbReference>
<dbReference type="Gene3D" id="1.10.287.80">
    <property type="entry name" value="ATP synthase, gamma subunit, helix hairpin domain"/>
    <property type="match status" value="1"/>
</dbReference>
<dbReference type="HAMAP" id="MF_00815">
    <property type="entry name" value="ATP_synth_gamma_bact"/>
    <property type="match status" value="1"/>
</dbReference>
<dbReference type="InterPro" id="IPR035968">
    <property type="entry name" value="ATP_synth_F1_ATPase_gsu"/>
</dbReference>
<dbReference type="InterPro" id="IPR000131">
    <property type="entry name" value="ATP_synth_F1_gsu"/>
</dbReference>
<dbReference type="InterPro" id="IPR023632">
    <property type="entry name" value="ATP_synth_F1_gsu_CS"/>
</dbReference>
<dbReference type="NCBIfam" id="TIGR01146">
    <property type="entry name" value="ATPsyn_F1gamma"/>
    <property type="match status" value="1"/>
</dbReference>
<dbReference type="NCBIfam" id="NF004147">
    <property type="entry name" value="PRK05621.2-1"/>
    <property type="match status" value="1"/>
</dbReference>
<dbReference type="PANTHER" id="PTHR11693">
    <property type="entry name" value="ATP SYNTHASE GAMMA CHAIN"/>
    <property type="match status" value="1"/>
</dbReference>
<dbReference type="PANTHER" id="PTHR11693:SF22">
    <property type="entry name" value="ATP SYNTHASE SUBUNIT GAMMA, MITOCHONDRIAL"/>
    <property type="match status" value="1"/>
</dbReference>
<dbReference type="Pfam" id="PF00231">
    <property type="entry name" value="ATP-synt"/>
    <property type="match status" value="1"/>
</dbReference>
<dbReference type="PRINTS" id="PR00126">
    <property type="entry name" value="ATPASEGAMMA"/>
</dbReference>
<dbReference type="SUPFAM" id="SSF52943">
    <property type="entry name" value="ATP synthase (F1-ATPase), gamma subunit"/>
    <property type="match status" value="1"/>
</dbReference>
<dbReference type="PROSITE" id="PS00153">
    <property type="entry name" value="ATPASE_GAMMA"/>
    <property type="match status" value="1"/>
</dbReference>
<evidence type="ECO:0000255" key="1">
    <source>
        <dbReference type="HAMAP-Rule" id="MF_00815"/>
    </source>
</evidence>
<accession>Q3K1J6</accession>
<gene>
    <name evidence="1" type="primary">atpG</name>
    <name type="ordered locus">SAK_0985</name>
</gene>
<comment type="function">
    <text evidence="1">Produces ATP from ADP in the presence of a proton gradient across the membrane. The gamma chain is believed to be important in regulating ATPase activity and the flow of protons through the CF(0) complex.</text>
</comment>
<comment type="subunit">
    <text evidence="1">F-type ATPases have 2 components, CF(1) - the catalytic core - and CF(0) - the membrane proton channel. CF(1) has five subunits: alpha(3), beta(3), gamma(1), delta(1), epsilon(1). CF(0) has three main subunits: a, b and c.</text>
</comment>
<comment type="subcellular location">
    <subcellularLocation>
        <location evidence="1">Cell membrane</location>
        <topology evidence="1">Peripheral membrane protein</topology>
    </subcellularLocation>
</comment>
<comment type="similarity">
    <text evidence="1">Belongs to the ATPase gamma chain family.</text>
</comment>
<name>ATPG_STRA1</name>
<protein>
    <recommendedName>
        <fullName evidence="1">ATP synthase gamma chain</fullName>
    </recommendedName>
    <alternativeName>
        <fullName evidence="1">ATP synthase F1 sector gamma subunit</fullName>
    </alternativeName>
    <alternativeName>
        <fullName evidence="1">F-ATPase gamma subunit</fullName>
    </alternativeName>
</protein>
<keyword id="KW-0066">ATP synthesis</keyword>
<keyword id="KW-1003">Cell membrane</keyword>
<keyword id="KW-0139">CF(1)</keyword>
<keyword id="KW-0375">Hydrogen ion transport</keyword>
<keyword id="KW-0406">Ion transport</keyword>
<keyword id="KW-0472">Membrane</keyword>
<keyword id="KW-0813">Transport</keyword>
<reference key="1">
    <citation type="journal article" date="2005" name="Proc. Natl. Acad. Sci. U.S.A.">
        <title>Genome analysis of multiple pathogenic isolates of Streptococcus agalactiae: implications for the microbial 'pan-genome'.</title>
        <authorList>
            <person name="Tettelin H."/>
            <person name="Masignani V."/>
            <person name="Cieslewicz M.J."/>
            <person name="Donati C."/>
            <person name="Medini D."/>
            <person name="Ward N.L."/>
            <person name="Angiuoli S.V."/>
            <person name="Crabtree J."/>
            <person name="Jones A.L."/>
            <person name="Durkin A.S."/>
            <person name="DeBoy R.T."/>
            <person name="Davidsen T.M."/>
            <person name="Mora M."/>
            <person name="Scarselli M."/>
            <person name="Margarit y Ros I."/>
            <person name="Peterson J.D."/>
            <person name="Hauser C.R."/>
            <person name="Sundaram J.P."/>
            <person name="Nelson W.C."/>
            <person name="Madupu R."/>
            <person name="Brinkac L.M."/>
            <person name="Dodson R.J."/>
            <person name="Rosovitz M.J."/>
            <person name="Sullivan S.A."/>
            <person name="Daugherty S.C."/>
            <person name="Haft D.H."/>
            <person name="Selengut J."/>
            <person name="Gwinn M.L."/>
            <person name="Zhou L."/>
            <person name="Zafar N."/>
            <person name="Khouri H."/>
            <person name="Radune D."/>
            <person name="Dimitrov G."/>
            <person name="Watkins K."/>
            <person name="O'Connor K.J."/>
            <person name="Smith S."/>
            <person name="Utterback T.R."/>
            <person name="White O."/>
            <person name="Rubens C.E."/>
            <person name="Grandi G."/>
            <person name="Madoff L.C."/>
            <person name="Kasper D.L."/>
            <person name="Telford J.L."/>
            <person name="Wessels M.R."/>
            <person name="Rappuoli R."/>
            <person name="Fraser C.M."/>
        </authorList>
    </citation>
    <scope>NUCLEOTIDE SEQUENCE [LARGE SCALE GENOMIC DNA]</scope>
    <source>
        <strain>ATCC 27591 / A909 / CDC SS700</strain>
    </source>
</reference>
<sequence length="293" mass="32399">MAGSLSEIKDKILSTEKTSKITSAMQMVSSAKLVKSEQAARDFQVYASKIRQITTNLLKSDLVSGSDNPMLSSRPVKKTGYIVITSDKGLVGGYNSKILKAMMDTITDYHTENDDYAIISIGSVGSDFFKARGMNVSFELRGLEDQPSFDQVGKIIAQAVEMYKNELFDELYVCYNHHVNSLTSQVRMQQMLPIKELDAEEASEDRVITGFELEPNREVILEQLLPQYTESLIYGAIIDAKTAEHAAGMTAMQTATDNAKNVINDLTIQYNRARQAAITQEITEIVAGANALE</sequence>
<organism>
    <name type="scientific">Streptococcus agalactiae serotype Ia (strain ATCC 27591 / A909 / CDC SS700)</name>
    <dbReference type="NCBI Taxonomy" id="205921"/>
    <lineage>
        <taxon>Bacteria</taxon>
        <taxon>Bacillati</taxon>
        <taxon>Bacillota</taxon>
        <taxon>Bacilli</taxon>
        <taxon>Lactobacillales</taxon>
        <taxon>Streptococcaceae</taxon>
        <taxon>Streptococcus</taxon>
    </lineage>
</organism>